<accession>A6VMF1</accession>
<name>Y778_ACTSZ</name>
<organism>
    <name type="scientific">Actinobacillus succinogenes (strain ATCC 55618 / DSM 22257 / CCUG 43843 / 130Z)</name>
    <dbReference type="NCBI Taxonomy" id="339671"/>
    <lineage>
        <taxon>Bacteria</taxon>
        <taxon>Pseudomonadati</taxon>
        <taxon>Pseudomonadota</taxon>
        <taxon>Gammaproteobacteria</taxon>
        <taxon>Pasteurellales</taxon>
        <taxon>Pasteurellaceae</taxon>
        <taxon>Actinobacillus</taxon>
    </lineage>
</organism>
<evidence type="ECO:0000255" key="1">
    <source>
        <dbReference type="HAMAP-Rule" id="MF_00816"/>
    </source>
</evidence>
<protein>
    <recommendedName>
        <fullName evidence="1">UPF0352 protein Asuc_0778</fullName>
    </recommendedName>
</protein>
<feature type="chain" id="PRO_1000072866" description="UPF0352 protein Asuc_0778">
    <location>
        <begin position="1"/>
        <end position="71"/>
    </location>
</feature>
<reference key="1">
    <citation type="journal article" date="2010" name="BMC Genomics">
        <title>A genomic perspective on the potential of Actinobacillus succinogenes for industrial succinate production.</title>
        <authorList>
            <person name="McKinlay J.B."/>
            <person name="Laivenieks M."/>
            <person name="Schindler B.D."/>
            <person name="McKinlay A.A."/>
            <person name="Siddaramappa S."/>
            <person name="Challacombe J.F."/>
            <person name="Lowry S.R."/>
            <person name="Clum A."/>
            <person name="Lapidus A.L."/>
            <person name="Burkhart K.B."/>
            <person name="Harkins V."/>
            <person name="Vieille C."/>
        </authorList>
    </citation>
    <scope>NUCLEOTIDE SEQUENCE [LARGE SCALE GENOMIC DNA]</scope>
    <source>
        <strain>ATCC 55618 / DSM 22257 / CCUG 43843 / 130Z</strain>
    </source>
</reference>
<comment type="similarity">
    <text evidence="1">Belongs to the UPF0352 family.</text>
</comment>
<dbReference type="EMBL" id="CP000746">
    <property type="protein sequence ID" value="ABR74148.1"/>
    <property type="molecule type" value="Genomic_DNA"/>
</dbReference>
<dbReference type="RefSeq" id="WP_012072526.1">
    <property type="nucleotide sequence ID" value="NC_009655.1"/>
</dbReference>
<dbReference type="SMR" id="A6VMF1"/>
<dbReference type="STRING" id="339671.Asuc_0778"/>
<dbReference type="KEGG" id="asu:Asuc_0778"/>
<dbReference type="eggNOG" id="COG3082">
    <property type="taxonomic scope" value="Bacteria"/>
</dbReference>
<dbReference type="HOGENOM" id="CLU_175457_0_0_6"/>
<dbReference type="OrthoDB" id="5771474at2"/>
<dbReference type="Proteomes" id="UP000001114">
    <property type="component" value="Chromosome"/>
</dbReference>
<dbReference type="Gene3D" id="1.10.3390.10">
    <property type="entry name" value="YejL-like"/>
    <property type="match status" value="1"/>
</dbReference>
<dbReference type="HAMAP" id="MF_00816">
    <property type="entry name" value="UPF0352"/>
    <property type="match status" value="1"/>
</dbReference>
<dbReference type="InterPro" id="IPR009857">
    <property type="entry name" value="UPF0352"/>
</dbReference>
<dbReference type="InterPro" id="IPR023202">
    <property type="entry name" value="YejL_sf"/>
</dbReference>
<dbReference type="NCBIfam" id="NF010242">
    <property type="entry name" value="PRK13689.1"/>
    <property type="match status" value="1"/>
</dbReference>
<dbReference type="Pfam" id="PF07208">
    <property type="entry name" value="DUF1414"/>
    <property type="match status" value="1"/>
</dbReference>
<dbReference type="PIRSF" id="PIRSF006188">
    <property type="entry name" value="UCP006188"/>
    <property type="match status" value="1"/>
</dbReference>
<dbReference type="SUPFAM" id="SSF158651">
    <property type="entry name" value="YejL-like"/>
    <property type="match status" value="1"/>
</dbReference>
<keyword id="KW-1185">Reference proteome</keyword>
<gene>
    <name type="ordered locus">Asuc_0778</name>
</gene>
<sequence>MAKNSKYSDKQVDAVLHDMIAVLEKHQAPVELSLIVLGNMVTNLLASSVGTHQQAALAQAFSDALMNSVKK</sequence>
<proteinExistence type="inferred from homology"/>